<dbReference type="EMBL" id="CP001132">
    <property type="protein sequence ID" value="ACH82753.1"/>
    <property type="molecule type" value="Genomic_DNA"/>
</dbReference>
<dbReference type="RefSeq" id="WP_012536087.1">
    <property type="nucleotide sequence ID" value="NC_011206.1"/>
</dbReference>
<dbReference type="SMR" id="B5ELY1"/>
<dbReference type="GeneID" id="65279708"/>
<dbReference type="KEGG" id="afe:Lferr_0499"/>
<dbReference type="eggNOG" id="COG0089">
    <property type="taxonomic scope" value="Bacteria"/>
</dbReference>
<dbReference type="HOGENOM" id="CLU_037562_3_1_6"/>
<dbReference type="GO" id="GO:1990904">
    <property type="term" value="C:ribonucleoprotein complex"/>
    <property type="evidence" value="ECO:0007669"/>
    <property type="project" value="UniProtKB-KW"/>
</dbReference>
<dbReference type="GO" id="GO:0005840">
    <property type="term" value="C:ribosome"/>
    <property type="evidence" value="ECO:0007669"/>
    <property type="project" value="UniProtKB-KW"/>
</dbReference>
<dbReference type="GO" id="GO:0019843">
    <property type="term" value="F:rRNA binding"/>
    <property type="evidence" value="ECO:0007669"/>
    <property type="project" value="UniProtKB-UniRule"/>
</dbReference>
<dbReference type="GO" id="GO:0003735">
    <property type="term" value="F:structural constituent of ribosome"/>
    <property type="evidence" value="ECO:0007669"/>
    <property type="project" value="InterPro"/>
</dbReference>
<dbReference type="GO" id="GO:0006412">
    <property type="term" value="P:translation"/>
    <property type="evidence" value="ECO:0007669"/>
    <property type="project" value="UniProtKB-UniRule"/>
</dbReference>
<dbReference type="FunFam" id="3.30.70.330:FF:000001">
    <property type="entry name" value="50S ribosomal protein L23"/>
    <property type="match status" value="1"/>
</dbReference>
<dbReference type="Gene3D" id="3.30.70.330">
    <property type="match status" value="1"/>
</dbReference>
<dbReference type="HAMAP" id="MF_01369_B">
    <property type="entry name" value="Ribosomal_uL23_B"/>
    <property type="match status" value="1"/>
</dbReference>
<dbReference type="InterPro" id="IPR012677">
    <property type="entry name" value="Nucleotide-bd_a/b_plait_sf"/>
</dbReference>
<dbReference type="InterPro" id="IPR013025">
    <property type="entry name" value="Ribosomal_uL23-like"/>
</dbReference>
<dbReference type="InterPro" id="IPR012678">
    <property type="entry name" value="Ribosomal_uL23/eL15/eS24_sf"/>
</dbReference>
<dbReference type="NCBIfam" id="NF004359">
    <property type="entry name" value="PRK05738.1-3"/>
    <property type="match status" value="1"/>
</dbReference>
<dbReference type="NCBIfam" id="NF004363">
    <property type="entry name" value="PRK05738.2-4"/>
    <property type="match status" value="1"/>
</dbReference>
<dbReference type="NCBIfam" id="NF004366">
    <property type="entry name" value="PRK05738.3-2"/>
    <property type="match status" value="1"/>
</dbReference>
<dbReference type="PANTHER" id="PTHR11620">
    <property type="entry name" value="60S RIBOSOMAL PROTEIN L23A"/>
    <property type="match status" value="1"/>
</dbReference>
<dbReference type="Pfam" id="PF00276">
    <property type="entry name" value="Ribosomal_L23"/>
    <property type="match status" value="1"/>
</dbReference>
<dbReference type="SUPFAM" id="SSF54189">
    <property type="entry name" value="Ribosomal proteins S24e, L23 and L15e"/>
    <property type="match status" value="1"/>
</dbReference>
<proteinExistence type="inferred from homology"/>
<accession>B5ELY1</accession>
<comment type="function">
    <text evidence="1">One of the early assembly proteins it binds 23S rRNA. One of the proteins that surrounds the polypeptide exit tunnel on the outside of the ribosome. Forms the main docking site for trigger factor binding to the ribosome.</text>
</comment>
<comment type="subunit">
    <text evidence="1">Part of the 50S ribosomal subunit. Contacts protein L29, and trigger factor when it is bound to the ribosome.</text>
</comment>
<comment type="similarity">
    <text evidence="1">Belongs to the universal ribosomal protein uL23 family.</text>
</comment>
<reference key="1">
    <citation type="submission" date="2008-08" db="EMBL/GenBank/DDBJ databases">
        <title>Complete sequence of Acidithiobacillus ferrooxidans ATCC 53993.</title>
        <authorList>
            <person name="Lucas S."/>
            <person name="Copeland A."/>
            <person name="Lapidus A."/>
            <person name="Glavina del Rio T."/>
            <person name="Dalin E."/>
            <person name="Tice H."/>
            <person name="Bruce D."/>
            <person name="Goodwin L."/>
            <person name="Pitluck S."/>
            <person name="Sims D."/>
            <person name="Brettin T."/>
            <person name="Detter J.C."/>
            <person name="Han C."/>
            <person name="Kuske C.R."/>
            <person name="Larimer F."/>
            <person name="Land M."/>
            <person name="Hauser L."/>
            <person name="Kyrpides N."/>
            <person name="Lykidis A."/>
            <person name="Borole A.P."/>
        </authorList>
    </citation>
    <scope>NUCLEOTIDE SEQUENCE [LARGE SCALE GENOMIC DNA]</scope>
    <source>
        <strain>ATCC 53993 / BNL-5-31</strain>
    </source>
</reference>
<organism>
    <name type="scientific">Acidithiobacillus ferrooxidans (strain ATCC 53993 / BNL-5-31)</name>
    <name type="common">Leptospirillum ferrooxidans (ATCC 53993)</name>
    <dbReference type="NCBI Taxonomy" id="380394"/>
    <lineage>
        <taxon>Bacteria</taxon>
        <taxon>Pseudomonadati</taxon>
        <taxon>Pseudomonadota</taxon>
        <taxon>Acidithiobacillia</taxon>
        <taxon>Acidithiobacillales</taxon>
        <taxon>Acidithiobacillaceae</taxon>
        <taxon>Acidithiobacillus</taxon>
    </lineage>
</organism>
<feature type="chain" id="PRO_1000144521" description="Large ribosomal subunit protein uL23">
    <location>
        <begin position="1"/>
        <end position="97"/>
    </location>
</feature>
<evidence type="ECO:0000255" key="1">
    <source>
        <dbReference type="HAMAP-Rule" id="MF_01369"/>
    </source>
</evidence>
<evidence type="ECO:0000305" key="2"/>
<keyword id="KW-0687">Ribonucleoprotein</keyword>
<keyword id="KW-0689">Ribosomal protein</keyword>
<keyword id="KW-0694">RNA-binding</keyword>
<keyword id="KW-0699">rRNA-binding</keyword>
<gene>
    <name evidence="1" type="primary">rplW</name>
    <name type="ordered locus">Lferr_0499</name>
</gene>
<name>RL23_ACIF5</name>
<sequence length="97" mass="11048">MNAERKYLVLLAPVISEKSTMVQQQANQFVFKVARDATKREIRSAVEKLFEVQVLSVQTCNYLGKEKRVGRHVGRRSSWKKAYVRLAEGSSIDYGVA</sequence>
<protein>
    <recommendedName>
        <fullName evidence="1">Large ribosomal subunit protein uL23</fullName>
    </recommendedName>
    <alternativeName>
        <fullName evidence="2">50S ribosomal protein L23</fullName>
    </alternativeName>
</protein>